<reference key="1">
    <citation type="journal article" date="1991" name="Nucleic Acids Res.">
        <title>Nucleotide sequences of a cDNA clone encoding mouse ribosomal protein S24.</title>
        <authorList>
            <person name="Ro H.-S."/>
            <person name="Xu L."/>
        </authorList>
    </citation>
    <scope>NUCLEOTIDE SEQUENCE [MRNA] (ISOFORM 2)</scope>
</reference>
<reference key="2">
    <citation type="journal article" date="1994" name="Nucleic Acids Res.">
        <title>Molecular characterization of the mouse ribosomal protein S24 multigene family: a uniquely expressed intron-containing gene with cell-specific expression of three alternatively spliced mRNAs.</title>
        <authorList>
            <person name="Xu L."/>
            <person name="He G.-P."/>
            <person name="Li A."/>
            <person name="Ro H.-S."/>
        </authorList>
    </citation>
    <scope>NUCLEOTIDE SEQUENCE [GENOMIC DNA]</scope>
    <scope>ALTERNATIVE SPLICING (ISOFORMS 1; 2 AND 3)</scope>
    <scope>INDUCTION</scope>
</reference>
<reference key="3">
    <citation type="journal article" date="2005" name="Science">
        <title>The transcriptional landscape of the mammalian genome.</title>
        <authorList>
            <person name="Carninci P."/>
            <person name="Kasukawa T."/>
            <person name="Katayama S."/>
            <person name="Gough J."/>
            <person name="Frith M.C."/>
            <person name="Maeda N."/>
            <person name="Oyama R."/>
            <person name="Ravasi T."/>
            <person name="Lenhard B."/>
            <person name="Wells C."/>
            <person name="Kodzius R."/>
            <person name="Shimokawa K."/>
            <person name="Bajic V.B."/>
            <person name="Brenner S.E."/>
            <person name="Batalov S."/>
            <person name="Forrest A.R."/>
            <person name="Zavolan M."/>
            <person name="Davis M.J."/>
            <person name="Wilming L.G."/>
            <person name="Aidinis V."/>
            <person name="Allen J.E."/>
            <person name="Ambesi-Impiombato A."/>
            <person name="Apweiler R."/>
            <person name="Aturaliya R.N."/>
            <person name="Bailey T.L."/>
            <person name="Bansal M."/>
            <person name="Baxter L."/>
            <person name="Beisel K.W."/>
            <person name="Bersano T."/>
            <person name="Bono H."/>
            <person name="Chalk A.M."/>
            <person name="Chiu K.P."/>
            <person name="Choudhary V."/>
            <person name="Christoffels A."/>
            <person name="Clutterbuck D.R."/>
            <person name="Crowe M.L."/>
            <person name="Dalla E."/>
            <person name="Dalrymple B.P."/>
            <person name="de Bono B."/>
            <person name="Della Gatta G."/>
            <person name="di Bernardo D."/>
            <person name="Down T."/>
            <person name="Engstrom P."/>
            <person name="Fagiolini M."/>
            <person name="Faulkner G."/>
            <person name="Fletcher C.F."/>
            <person name="Fukushima T."/>
            <person name="Furuno M."/>
            <person name="Futaki S."/>
            <person name="Gariboldi M."/>
            <person name="Georgii-Hemming P."/>
            <person name="Gingeras T.R."/>
            <person name="Gojobori T."/>
            <person name="Green R.E."/>
            <person name="Gustincich S."/>
            <person name="Harbers M."/>
            <person name="Hayashi Y."/>
            <person name="Hensch T.K."/>
            <person name="Hirokawa N."/>
            <person name="Hill D."/>
            <person name="Huminiecki L."/>
            <person name="Iacono M."/>
            <person name="Ikeo K."/>
            <person name="Iwama A."/>
            <person name="Ishikawa T."/>
            <person name="Jakt M."/>
            <person name="Kanapin A."/>
            <person name="Katoh M."/>
            <person name="Kawasawa Y."/>
            <person name="Kelso J."/>
            <person name="Kitamura H."/>
            <person name="Kitano H."/>
            <person name="Kollias G."/>
            <person name="Krishnan S.P."/>
            <person name="Kruger A."/>
            <person name="Kummerfeld S.K."/>
            <person name="Kurochkin I.V."/>
            <person name="Lareau L.F."/>
            <person name="Lazarevic D."/>
            <person name="Lipovich L."/>
            <person name="Liu J."/>
            <person name="Liuni S."/>
            <person name="McWilliam S."/>
            <person name="Madan Babu M."/>
            <person name="Madera M."/>
            <person name="Marchionni L."/>
            <person name="Matsuda H."/>
            <person name="Matsuzawa S."/>
            <person name="Miki H."/>
            <person name="Mignone F."/>
            <person name="Miyake S."/>
            <person name="Morris K."/>
            <person name="Mottagui-Tabar S."/>
            <person name="Mulder N."/>
            <person name="Nakano N."/>
            <person name="Nakauchi H."/>
            <person name="Ng P."/>
            <person name="Nilsson R."/>
            <person name="Nishiguchi S."/>
            <person name="Nishikawa S."/>
            <person name="Nori F."/>
            <person name="Ohara O."/>
            <person name="Okazaki Y."/>
            <person name="Orlando V."/>
            <person name="Pang K.C."/>
            <person name="Pavan W.J."/>
            <person name="Pavesi G."/>
            <person name="Pesole G."/>
            <person name="Petrovsky N."/>
            <person name="Piazza S."/>
            <person name="Reed J."/>
            <person name="Reid J.F."/>
            <person name="Ring B.Z."/>
            <person name="Ringwald M."/>
            <person name="Rost B."/>
            <person name="Ruan Y."/>
            <person name="Salzberg S.L."/>
            <person name="Sandelin A."/>
            <person name="Schneider C."/>
            <person name="Schoenbach C."/>
            <person name="Sekiguchi K."/>
            <person name="Semple C.A."/>
            <person name="Seno S."/>
            <person name="Sessa L."/>
            <person name="Sheng Y."/>
            <person name="Shibata Y."/>
            <person name="Shimada H."/>
            <person name="Shimada K."/>
            <person name="Silva D."/>
            <person name="Sinclair B."/>
            <person name="Sperling S."/>
            <person name="Stupka E."/>
            <person name="Sugiura K."/>
            <person name="Sultana R."/>
            <person name="Takenaka Y."/>
            <person name="Taki K."/>
            <person name="Tammoja K."/>
            <person name="Tan S.L."/>
            <person name="Tang S."/>
            <person name="Taylor M.S."/>
            <person name="Tegner J."/>
            <person name="Teichmann S.A."/>
            <person name="Ueda H.R."/>
            <person name="van Nimwegen E."/>
            <person name="Verardo R."/>
            <person name="Wei C.L."/>
            <person name="Yagi K."/>
            <person name="Yamanishi H."/>
            <person name="Zabarovsky E."/>
            <person name="Zhu S."/>
            <person name="Zimmer A."/>
            <person name="Hide W."/>
            <person name="Bult C."/>
            <person name="Grimmond S.M."/>
            <person name="Teasdale R.D."/>
            <person name="Liu E.T."/>
            <person name="Brusic V."/>
            <person name="Quackenbush J."/>
            <person name="Wahlestedt C."/>
            <person name="Mattick J.S."/>
            <person name="Hume D.A."/>
            <person name="Kai C."/>
            <person name="Sasaki D."/>
            <person name="Tomaru Y."/>
            <person name="Fukuda S."/>
            <person name="Kanamori-Katayama M."/>
            <person name="Suzuki M."/>
            <person name="Aoki J."/>
            <person name="Arakawa T."/>
            <person name="Iida J."/>
            <person name="Imamura K."/>
            <person name="Itoh M."/>
            <person name="Kato T."/>
            <person name="Kawaji H."/>
            <person name="Kawagashira N."/>
            <person name="Kawashima T."/>
            <person name="Kojima M."/>
            <person name="Kondo S."/>
            <person name="Konno H."/>
            <person name="Nakano K."/>
            <person name="Ninomiya N."/>
            <person name="Nishio T."/>
            <person name="Okada M."/>
            <person name="Plessy C."/>
            <person name="Shibata K."/>
            <person name="Shiraki T."/>
            <person name="Suzuki S."/>
            <person name="Tagami M."/>
            <person name="Waki K."/>
            <person name="Watahiki A."/>
            <person name="Okamura-Oho Y."/>
            <person name="Suzuki H."/>
            <person name="Kawai J."/>
            <person name="Hayashizaki Y."/>
        </authorList>
    </citation>
    <scope>NUCLEOTIDE SEQUENCE [LARGE SCALE MRNA] (ISOFORMS 1 AND 2)</scope>
    <source>
        <strain>C57BL/6J</strain>
        <tissue>Cerebellum</tissue>
        <tissue>Kidney</tissue>
        <tissue>Pancreas</tissue>
    </source>
</reference>
<reference key="4">
    <citation type="journal article" date="2004" name="Genome Res.">
        <title>The status, quality, and expansion of the NIH full-length cDNA project: the Mammalian Gene Collection (MGC).</title>
        <authorList>
            <consortium name="The MGC Project Team"/>
        </authorList>
    </citation>
    <scope>NUCLEOTIDE SEQUENCE [LARGE SCALE MRNA] (ISOFORMS 2 AND 3)</scope>
    <source>
        <strain>C3H/He</strain>
        <strain>C57BL/6J</strain>
        <tissue>Brain</tissue>
        <tissue>Osteoblast</tissue>
    </source>
</reference>
<reference key="5">
    <citation type="journal article" date="2010" name="Cell">
        <title>A tissue-specific atlas of mouse protein phosphorylation and expression.</title>
        <authorList>
            <person name="Huttlin E.L."/>
            <person name="Jedrychowski M.P."/>
            <person name="Elias J.E."/>
            <person name="Goswami T."/>
            <person name="Rad R."/>
            <person name="Beausoleil S.A."/>
            <person name="Villen J."/>
            <person name="Haas W."/>
            <person name="Sowa M.E."/>
            <person name="Gygi S.P."/>
        </authorList>
    </citation>
    <scope>IDENTIFICATION BY MASS SPECTROMETRY [LARGE SCALE ANALYSIS]</scope>
    <source>
        <tissue>Brain</tissue>
        <tissue>Brown adipose tissue</tissue>
        <tissue>Heart</tissue>
        <tissue>Kidney</tissue>
        <tissue>Liver</tissue>
        <tissue>Lung</tissue>
        <tissue>Pancreas</tissue>
        <tissue>Spleen</tissue>
        <tissue>Testis</tissue>
    </source>
</reference>
<reference evidence="9 10" key="6">
    <citation type="journal article" date="2022" name="Nature">
        <title>A male germ-cell-specific ribosome controls male fertility.</title>
        <authorList>
            <person name="Li H."/>
            <person name="Huo Y."/>
            <person name="He X."/>
            <person name="Yao L."/>
            <person name="Zhang H."/>
            <person name="Cui Y."/>
            <person name="Xiao H."/>
            <person name="Xie W."/>
            <person name="Zhang D."/>
            <person name="Wang Y."/>
            <person name="Zhang S."/>
            <person name="Tu H."/>
            <person name="Cheng Y."/>
            <person name="Guo Y."/>
            <person name="Cao X."/>
            <person name="Zhu Y."/>
            <person name="Jiang T."/>
            <person name="Guo X."/>
            <person name="Qin Y."/>
            <person name="Sha J."/>
        </authorList>
    </citation>
    <scope>STRUCTURE BY ELECTRON MICROSCOPY (3.03 ANGSTROMS) OF RIBOSOME</scope>
    <scope>FUNCTION</scope>
    <scope>SUBUNIT</scope>
    <scope>SUBCELLULAR LOCATION</scope>
</reference>
<gene>
    <name type="primary">Rps24</name>
</gene>
<proteinExistence type="evidence at protein level"/>
<accession>P62849</accession>
<accession>P16632</accession>
<accession>Q642L0</accession>
<accession>Q6PDB5</accession>
<dbReference type="EMBL" id="X60289">
    <property type="protein sequence ID" value="CAA42829.1"/>
    <property type="molecule type" value="mRNA"/>
</dbReference>
<dbReference type="EMBL" id="X71972">
    <property type="protein sequence ID" value="CAA50792.1"/>
    <property type="molecule type" value="Genomic_DNA"/>
</dbReference>
<dbReference type="EMBL" id="AK005358">
    <property type="protein sequence ID" value="BAB23973.1"/>
    <property type="molecule type" value="mRNA"/>
</dbReference>
<dbReference type="EMBL" id="AK007776">
    <property type="protein sequence ID" value="BAB25248.1"/>
    <property type="molecule type" value="mRNA"/>
</dbReference>
<dbReference type="EMBL" id="AK012537">
    <property type="protein sequence ID" value="BAB28304.1"/>
    <property type="molecule type" value="mRNA"/>
</dbReference>
<dbReference type="EMBL" id="AK018704">
    <property type="protein sequence ID" value="BAB31355.1"/>
    <property type="molecule type" value="mRNA"/>
</dbReference>
<dbReference type="EMBL" id="AK049387">
    <property type="protein sequence ID" value="BAC33727.1"/>
    <property type="molecule type" value="mRNA"/>
</dbReference>
<dbReference type="EMBL" id="BC058817">
    <property type="protein sequence ID" value="AAH58817.1"/>
    <property type="molecule type" value="mRNA"/>
</dbReference>
<dbReference type="EMBL" id="BC081457">
    <property type="protein sequence ID" value="AAH81457.1"/>
    <property type="molecule type" value="mRNA"/>
</dbReference>
<dbReference type="CCDS" id="CCDS36829.1"/>
<dbReference type="CCDS" id="CCDS36830.1">
    <molecule id="P62849-2"/>
</dbReference>
<dbReference type="CCDS" id="CCDS88597.1">
    <molecule id="P62849-3"/>
</dbReference>
<dbReference type="RefSeq" id="NP_001347514.1">
    <molecule id="P62849-3"/>
    <property type="nucleotide sequence ID" value="NM_001360585.2"/>
</dbReference>
<dbReference type="RefSeq" id="NP_001411487.1">
    <molecule id="P62849-3"/>
    <property type="nucleotide sequence ID" value="NM_001424558.1"/>
</dbReference>
<dbReference type="RefSeq" id="NP_001411488.1">
    <molecule id="P62849-3"/>
    <property type="nucleotide sequence ID" value="NM_001424559.1"/>
</dbReference>
<dbReference type="RefSeq" id="NP_001411489.1">
    <molecule id="P62849-3"/>
    <property type="nucleotide sequence ID" value="NM_001424560.1"/>
</dbReference>
<dbReference type="RefSeq" id="NP_001411490.1">
    <molecule id="P62849-3"/>
    <property type="nucleotide sequence ID" value="NM_001424561.1"/>
</dbReference>
<dbReference type="RefSeq" id="NP_035427.2">
    <molecule id="P62849-2"/>
    <property type="nucleotide sequence ID" value="NM_011297.2"/>
</dbReference>
<dbReference type="RefSeq" id="NP_997517.1">
    <molecule id="P62849-1"/>
    <property type="nucleotide sequence ID" value="NM_207634.3"/>
</dbReference>
<dbReference type="RefSeq" id="NP_997518.1">
    <molecule id="P62849-3"/>
    <property type="nucleotide sequence ID" value="NM_207635.3"/>
</dbReference>
<dbReference type="RefSeq" id="XP_006518797.1">
    <property type="nucleotide sequence ID" value="XM_006518734.1"/>
</dbReference>
<dbReference type="PDB" id="7CPU">
    <property type="method" value="EM"/>
    <property type="resolution" value="2.82 A"/>
    <property type="chains" value="SY=1-133"/>
</dbReference>
<dbReference type="PDB" id="7CPV">
    <property type="method" value="EM"/>
    <property type="resolution" value="3.03 A"/>
    <property type="chains" value="SY=1-133"/>
</dbReference>
<dbReference type="PDB" id="7LS1">
    <property type="method" value="EM"/>
    <property type="resolution" value="3.30 A"/>
    <property type="chains" value="Q3=1-133"/>
</dbReference>
<dbReference type="PDB" id="7LS2">
    <property type="method" value="EM"/>
    <property type="resolution" value="3.10 A"/>
    <property type="chains" value="Q3=1-133"/>
</dbReference>
<dbReference type="PDBsum" id="7CPU"/>
<dbReference type="PDBsum" id="7CPV"/>
<dbReference type="PDBsum" id="7LS1"/>
<dbReference type="PDBsum" id="7LS2"/>
<dbReference type="EMDB" id="EMD-23500"/>
<dbReference type="EMDB" id="EMD-23501"/>
<dbReference type="EMDB" id="EMD-30432"/>
<dbReference type="EMDB" id="EMD-30433"/>
<dbReference type="SMR" id="P62849"/>
<dbReference type="BioGRID" id="203008">
    <property type="interactions" value="79"/>
</dbReference>
<dbReference type="ComplexPortal" id="CPX-5261">
    <property type="entry name" value="40S cytosolic small ribosomal subunit"/>
</dbReference>
<dbReference type="FunCoup" id="P62849">
    <property type="interactions" value="2673"/>
</dbReference>
<dbReference type="IntAct" id="P62849">
    <property type="interactions" value="4"/>
</dbReference>
<dbReference type="MINT" id="P62849"/>
<dbReference type="STRING" id="10090.ENSMUSP00000152944"/>
<dbReference type="GlyGen" id="P62849">
    <property type="glycosylation" value="1 site, 1 O-linked glycan (1 site)"/>
</dbReference>
<dbReference type="iPTMnet" id="P62849"/>
<dbReference type="MetOSite" id="P62849"/>
<dbReference type="PhosphoSitePlus" id="P62849"/>
<dbReference type="SwissPalm" id="P62849"/>
<dbReference type="jPOST" id="P62849"/>
<dbReference type="PaxDb" id="10090-ENSMUSP00000125977"/>
<dbReference type="PeptideAtlas" id="P62849"/>
<dbReference type="ProteomicsDB" id="299818"/>
<dbReference type="ProteomicsDB" id="299819">
    <molecule id="P62849-2"/>
</dbReference>
<dbReference type="ProteomicsDB" id="299820">
    <molecule id="P62849-3"/>
</dbReference>
<dbReference type="Pumba" id="P62849"/>
<dbReference type="DNASU" id="20088"/>
<dbReference type="Ensembl" id="ENSMUST00000112384.10">
    <molecule id="P62849-2"/>
    <property type="protein sequence ID" value="ENSMUSP00000108003.4"/>
    <property type="gene ID" value="ENSMUSG00000025290.18"/>
</dbReference>
<dbReference type="Ensembl" id="ENSMUST00000169826.3">
    <molecule id="P62849-2"/>
    <property type="protein sequence ID" value="ENSMUSP00000125977.3"/>
    <property type="gene ID" value="ENSMUSG00000025290.18"/>
</dbReference>
<dbReference type="Ensembl" id="ENSMUST00000223999.2">
    <molecule id="P62849-3"/>
    <property type="protein sequence ID" value="ENSMUSP00000153659.2"/>
    <property type="gene ID" value="ENSMUSG00000025290.18"/>
</dbReference>
<dbReference type="Ensembl" id="ENSMUST00000225023.2">
    <molecule id="P62849-1"/>
    <property type="protein sequence ID" value="ENSMUSP00000152944.2"/>
    <property type="gene ID" value="ENSMUSG00000025290.18"/>
</dbReference>
<dbReference type="GeneID" id="20088"/>
<dbReference type="KEGG" id="mmu:20088"/>
<dbReference type="UCSC" id="uc007sra.1">
    <property type="organism name" value="mouse"/>
</dbReference>
<dbReference type="UCSC" id="uc007src.1">
    <molecule id="P62849-3"/>
    <property type="organism name" value="mouse"/>
</dbReference>
<dbReference type="AGR" id="MGI:98147"/>
<dbReference type="CTD" id="6229"/>
<dbReference type="MGI" id="MGI:98147">
    <property type="gene designation" value="Rps24"/>
</dbReference>
<dbReference type="VEuPathDB" id="HostDB:ENSMUSG00000025290"/>
<dbReference type="eggNOG" id="KOG3424">
    <property type="taxonomic scope" value="Eukaryota"/>
</dbReference>
<dbReference type="GeneTree" id="ENSGT00390000000153"/>
<dbReference type="HOGENOM" id="CLU_107248_1_0_1"/>
<dbReference type="InParanoid" id="P62849"/>
<dbReference type="OMA" id="IRVKKYM"/>
<dbReference type="OrthoDB" id="5571754at2759"/>
<dbReference type="PhylomeDB" id="P62849"/>
<dbReference type="TreeFam" id="TF314134"/>
<dbReference type="Reactome" id="R-MMU-156827">
    <property type="pathway name" value="L13a-mediated translational silencing of Ceruloplasmin expression"/>
</dbReference>
<dbReference type="Reactome" id="R-MMU-1799339">
    <property type="pathway name" value="SRP-dependent cotranslational protein targeting to membrane"/>
</dbReference>
<dbReference type="Reactome" id="R-MMU-6791226">
    <property type="pathway name" value="Major pathway of rRNA processing in the nucleolus and cytosol"/>
</dbReference>
<dbReference type="Reactome" id="R-MMU-72649">
    <property type="pathway name" value="Translation initiation complex formation"/>
</dbReference>
<dbReference type="Reactome" id="R-MMU-72689">
    <property type="pathway name" value="Formation of a pool of free 40S subunits"/>
</dbReference>
<dbReference type="Reactome" id="R-MMU-72695">
    <property type="pathway name" value="Formation of the ternary complex, and subsequently, the 43S complex"/>
</dbReference>
<dbReference type="Reactome" id="R-MMU-72702">
    <property type="pathway name" value="Ribosomal scanning and start codon recognition"/>
</dbReference>
<dbReference type="Reactome" id="R-MMU-72706">
    <property type="pathway name" value="GTP hydrolysis and joining of the 60S ribosomal subunit"/>
</dbReference>
<dbReference type="Reactome" id="R-MMU-975956">
    <property type="pathway name" value="Nonsense Mediated Decay (NMD) independent of the Exon Junction Complex (EJC)"/>
</dbReference>
<dbReference type="Reactome" id="R-MMU-975957">
    <property type="pathway name" value="Nonsense Mediated Decay (NMD) enhanced by the Exon Junction Complex (EJC)"/>
</dbReference>
<dbReference type="BioGRID-ORCS" id="20088">
    <property type="hits" value="14 hits in 57 CRISPR screens"/>
</dbReference>
<dbReference type="CD-CODE" id="5E82D60E">
    <property type="entry name" value="Nucleolus"/>
</dbReference>
<dbReference type="CD-CODE" id="CE726F99">
    <property type="entry name" value="Postsynaptic density"/>
</dbReference>
<dbReference type="ChiTaRS" id="Rps24">
    <property type="organism name" value="mouse"/>
</dbReference>
<dbReference type="PRO" id="PR:P62849"/>
<dbReference type="Proteomes" id="UP000000589">
    <property type="component" value="Chromosome 14"/>
</dbReference>
<dbReference type="RNAct" id="P62849">
    <property type="molecule type" value="protein"/>
</dbReference>
<dbReference type="Bgee" id="ENSMUSG00000025290">
    <property type="expression patterns" value="Expressed in ventricular zone and 241 other cell types or tissues"/>
</dbReference>
<dbReference type="ExpressionAtlas" id="P62849">
    <property type="expression patterns" value="baseline and differential"/>
</dbReference>
<dbReference type="GO" id="GO:0005737">
    <property type="term" value="C:cytoplasm"/>
    <property type="evidence" value="ECO:0000303"/>
    <property type="project" value="ComplexPortal"/>
</dbReference>
<dbReference type="GO" id="GO:0005829">
    <property type="term" value="C:cytosol"/>
    <property type="evidence" value="ECO:0000304"/>
    <property type="project" value="Reactome"/>
</dbReference>
<dbReference type="GO" id="GO:0022627">
    <property type="term" value="C:cytosolic small ribosomal subunit"/>
    <property type="evidence" value="ECO:0000314"/>
    <property type="project" value="UniProtKB"/>
</dbReference>
<dbReference type="GO" id="GO:0005730">
    <property type="term" value="C:nucleolus"/>
    <property type="evidence" value="ECO:0007669"/>
    <property type="project" value="UniProtKB-SubCell"/>
</dbReference>
<dbReference type="GO" id="GO:0098794">
    <property type="term" value="C:postsynapse"/>
    <property type="evidence" value="ECO:0000303"/>
    <property type="project" value="SynGO"/>
</dbReference>
<dbReference type="GO" id="GO:0098793">
    <property type="term" value="C:presynapse"/>
    <property type="evidence" value="ECO:0000303"/>
    <property type="project" value="SynGO"/>
</dbReference>
<dbReference type="GO" id="GO:0005840">
    <property type="term" value="C:ribosome"/>
    <property type="evidence" value="ECO:0000303"/>
    <property type="project" value="SynGO"/>
</dbReference>
<dbReference type="GO" id="GO:0015935">
    <property type="term" value="C:small ribosomal subunit"/>
    <property type="evidence" value="ECO:0000250"/>
    <property type="project" value="UniProtKB"/>
</dbReference>
<dbReference type="GO" id="GO:0032040">
    <property type="term" value="C:small-subunit processome"/>
    <property type="evidence" value="ECO:0000250"/>
    <property type="project" value="UniProtKB"/>
</dbReference>
<dbReference type="GO" id="GO:0045202">
    <property type="term" value="C:synapse"/>
    <property type="evidence" value="ECO:0000314"/>
    <property type="project" value="SynGO"/>
</dbReference>
<dbReference type="GO" id="GO:0003735">
    <property type="term" value="F:structural constituent of ribosome"/>
    <property type="evidence" value="ECO:0000314"/>
    <property type="project" value="UniProtKB"/>
</dbReference>
<dbReference type="GO" id="GO:0002181">
    <property type="term" value="P:cytoplasmic translation"/>
    <property type="evidence" value="ECO:0000303"/>
    <property type="project" value="ComplexPortal"/>
</dbReference>
<dbReference type="GO" id="GO:0042274">
    <property type="term" value="P:ribosomal small subunit biogenesis"/>
    <property type="evidence" value="ECO:0000250"/>
    <property type="project" value="UniProtKB"/>
</dbReference>
<dbReference type="GO" id="GO:0006412">
    <property type="term" value="P:translation"/>
    <property type="evidence" value="ECO:0000266"/>
    <property type="project" value="MGI"/>
</dbReference>
<dbReference type="GO" id="GO:0140242">
    <property type="term" value="P:translation at postsynapse"/>
    <property type="evidence" value="ECO:0000303"/>
    <property type="project" value="SynGO"/>
</dbReference>
<dbReference type="GO" id="GO:0140236">
    <property type="term" value="P:translation at presynapse"/>
    <property type="evidence" value="ECO:0000303"/>
    <property type="project" value="SynGO"/>
</dbReference>
<dbReference type="FunFam" id="3.30.70.3370:FF:000001">
    <property type="entry name" value="40S ribosomal protein S24"/>
    <property type="match status" value="1"/>
</dbReference>
<dbReference type="Gene3D" id="3.30.70.3370">
    <property type="match status" value="1"/>
</dbReference>
<dbReference type="HAMAP" id="MF_00545">
    <property type="entry name" value="Ribosomal_eS24"/>
    <property type="match status" value="1"/>
</dbReference>
<dbReference type="InterPro" id="IPR053709">
    <property type="entry name" value="eRP_eS24_sf"/>
</dbReference>
<dbReference type="InterPro" id="IPR001976">
    <property type="entry name" value="Ribosomal_eS24"/>
</dbReference>
<dbReference type="InterPro" id="IPR018098">
    <property type="entry name" value="Ribosomal_eS24_CS"/>
</dbReference>
<dbReference type="InterPro" id="IPR012678">
    <property type="entry name" value="Ribosomal_uL23/eL15/eS24_sf"/>
</dbReference>
<dbReference type="PANTHER" id="PTHR10496">
    <property type="entry name" value="40S RIBOSOMAL PROTEIN S24"/>
    <property type="match status" value="1"/>
</dbReference>
<dbReference type="Pfam" id="PF01282">
    <property type="entry name" value="Ribosomal_S24e"/>
    <property type="match status" value="1"/>
</dbReference>
<dbReference type="SUPFAM" id="SSF54189">
    <property type="entry name" value="Ribosomal proteins S24e, L23 and L15e"/>
    <property type="match status" value="1"/>
</dbReference>
<dbReference type="PROSITE" id="PS00529">
    <property type="entry name" value="RIBOSOMAL_S24E"/>
    <property type="match status" value="1"/>
</dbReference>
<protein>
    <recommendedName>
        <fullName evidence="8">Small ribosomal subunit protein eS24</fullName>
    </recommendedName>
    <alternativeName>
        <fullName>40S ribosomal protein S24</fullName>
    </alternativeName>
</protein>
<name>RS24_MOUSE</name>
<sequence length="133" mass="15423">MNDTVTIRTRKFMTNRLLQRKQMVIDVLHPGKATVPKTEIREKLAKMYKTTPDVIFVFGFRTHFGGGKTTGFGMIYDSLDYAKKNEPKHRLARHGLYEKKKTSRKQRKERKNRMKKVRGTAKANVGAGKKPKE</sequence>
<comment type="function">
    <text evidence="1 3">Component of the small ribosomal subunit (PubMed:36517592). The ribosome is a large ribonucleoprotein complex responsible for the synthesis of proteins in the cell (PubMed:36517592). Required for processing of pre-rRNA and maturation of 40S ribosomal subunits (By similarity). Part of the small subunit (SSU) processome, first precursor of the small eukaryotic ribosomal subunit. During the assembly of the SSU processome in the nucleolus, many ribosome biogenesis factors, an RNA chaperone and ribosomal proteins associate with the nascent pre-rRNA and work in concert to generate RNA folding, modifications, rearrangements and cleavage as well as targeted degradation of pre-ribosomal RNA by the RNA exosome (By similarity).</text>
</comment>
<comment type="subunit">
    <text evidence="1 3">Component of the small ribosomal subunit (PubMed:36517592). Part of the small subunit (SSU) processome, composed of more than 70 proteins and the RNA chaperone small nucleolar RNA (snoRNA) U3 (By similarity).</text>
</comment>
<comment type="subcellular location">
    <subcellularLocation>
        <location evidence="3">Cytoplasm</location>
    </subcellularLocation>
    <subcellularLocation>
        <location evidence="1">Nucleus</location>
        <location evidence="1">Nucleolus</location>
    </subcellularLocation>
</comment>
<comment type="alternative products">
    <event type="alternative splicing"/>
    <isoform>
        <id>P62849-1</id>
        <id>P16632-1</id>
        <name>1</name>
        <name>S24c</name>
        <sequence type="displayed"/>
    </isoform>
    <isoform>
        <id>P62849-2</id>
        <id>P16632-2</id>
        <name>2</name>
        <name>S24a</name>
        <sequence type="described" ref="VSP_011365"/>
    </isoform>
    <isoform>
        <id>P62849-3</id>
        <name>3</name>
        <name>S24b</name>
        <sequence type="described" ref="VSP_011366"/>
    </isoform>
    <text>Additional isoforms seem to exist.</text>
</comment>
<comment type="induction">
    <text evidence="4">Down-regulated during adipocyte differentiation and up-regulated during cellular transformation.</text>
</comment>
<comment type="similarity">
    <text evidence="8">Belongs to the eukaryotic ribosomal protein eS24 family.</text>
</comment>
<evidence type="ECO:0000250" key="1">
    <source>
        <dbReference type="UniProtKB" id="P62847"/>
    </source>
</evidence>
<evidence type="ECO:0000256" key="2">
    <source>
        <dbReference type="SAM" id="MobiDB-lite"/>
    </source>
</evidence>
<evidence type="ECO:0000269" key="3">
    <source>
    </source>
</evidence>
<evidence type="ECO:0000269" key="4">
    <source>
    </source>
</evidence>
<evidence type="ECO:0000303" key="5">
    <source>
    </source>
</evidence>
<evidence type="ECO:0000303" key="6">
    <source>
    </source>
</evidence>
<evidence type="ECO:0000303" key="7">
    <source>
    </source>
</evidence>
<evidence type="ECO:0000305" key="8"/>
<evidence type="ECO:0007744" key="9">
    <source>
        <dbReference type="PDB" id="7CPU"/>
    </source>
</evidence>
<evidence type="ECO:0007744" key="10">
    <source>
        <dbReference type="PDB" id="7CPV"/>
    </source>
</evidence>
<feature type="chain" id="PRO_0000137625" description="Small ribosomal subunit protein eS24">
    <location>
        <begin position="1"/>
        <end position="133"/>
    </location>
</feature>
<feature type="region of interest" description="Disordered" evidence="2">
    <location>
        <begin position="92"/>
        <end position="133"/>
    </location>
</feature>
<feature type="compositionally biased region" description="Basic residues" evidence="2">
    <location>
        <begin position="101"/>
        <end position="119"/>
    </location>
</feature>
<feature type="modified residue" description="N-acetylmethionine" evidence="1">
    <location>
        <position position="1"/>
    </location>
</feature>
<feature type="modified residue" description="Phosphothreonine" evidence="1">
    <location>
        <position position="9"/>
    </location>
</feature>
<feature type="cross-link" description="Glycyl lysine isopeptide (Lys-Gly) (interchain with G-Cter in SUMO2)" evidence="1">
    <location>
        <position position="37"/>
    </location>
</feature>
<feature type="splice variant" id="VSP_011365" description="In isoform 2." evidence="5 6 7">
    <location>
        <begin position="131"/>
        <end position="133"/>
    </location>
</feature>
<feature type="splice variant" id="VSP_011366" description="In isoform 3." evidence="5">
    <original>PKE</original>
    <variation>K</variation>
    <location>
        <begin position="131"/>
        <end position="133"/>
    </location>
</feature>
<organism>
    <name type="scientific">Mus musculus</name>
    <name type="common">Mouse</name>
    <dbReference type="NCBI Taxonomy" id="10090"/>
    <lineage>
        <taxon>Eukaryota</taxon>
        <taxon>Metazoa</taxon>
        <taxon>Chordata</taxon>
        <taxon>Craniata</taxon>
        <taxon>Vertebrata</taxon>
        <taxon>Euteleostomi</taxon>
        <taxon>Mammalia</taxon>
        <taxon>Eutheria</taxon>
        <taxon>Euarchontoglires</taxon>
        <taxon>Glires</taxon>
        <taxon>Rodentia</taxon>
        <taxon>Myomorpha</taxon>
        <taxon>Muroidea</taxon>
        <taxon>Muridae</taxon>
        <taxon>Murinae</taxon>
        <taxon>Mus</taxon>
        <taxon>Mus</taxon>
    </lineage>
</organism>
<keyword id="KW-0002">3D-structure</keyword>
<keyword id="KW-0007">Acetylation</keyword>
<keyword id="KW-0025">Alternative splicing</keyword>
<keyword id="KW-0963">Cytoplasm</keyword>
<keyword id="KW-1017">Isopeptide bond</keyword>
<keyword id="KW-0539">Nucleus</keyword>
<keyword id="KW-0597">Phosphoprotein</keyword>
<keyword id="KW-1185">Reference proteome</keyword>
<keyword id="KW-0687">Ribonucleoprotein</keyword>
<keyword id="KW-0689">Ribosomal protein</keyword>
<keyword id="KW-0832">Ubl conjugation</keyword>